<reference key="1">
    <citation type="journal article" date="2014" name="Mol. Biol. Evol.">
        <title>Clawing through evolution: toxin diversification and convergence in the ancient lineage Chilopoda (centipedes).</title>
        <authorList>
            <person name="Undheim E.A."/>
            <person name="Jones A."/>
            <person name="Clauser K.R."/>
            <person name="Holland J.W."/>
            <person name="Pineda S.S."/>
            <person name="King G.F."/>
            <person name="Fry B.G."/>
        </authorList>
    </citation>
    <scope>NUCLEOTIDE SEQUENCE [MRNA]</scope>
    <scope>NOMENCLATURE</scope>
    <source>
        <tissue>Venom gland</tissue>
    </source>
</reference>
<comment type="subcellular location">
    <subcellularLocation>
        <location evidence="4">Secreted</location>
    </subcellularLocation>
</comment>
<comment type="tissue specificity">
    <text evidence="4">Expressed by the venom gland.</text>
</comment>
<comment type="PTM">
    <text evidence="3">Contains 1 disulfide bond.</text>
</comment>
<comment type="similarity">
    <text evidence="3">Belongs to the scoloptoxin-22 family.</text>
</comment>
<comment type="online information" name="National Center for Biotechnology Information (NCBI)">
    <link uri="https://www.ncbi.nlm.nih.gov/nuccore/GASL01000048"/>
</comment>
<accession>P0DQF6</accession>
<name>TXM1A_CORWE</name>
<keyword id="KW-1015">Disulfide bond</keyword>
<keyword id="KW-0964">Secreted</keyword>
<keyword id="KW-0732">Signal</keyword>
<keyword id="KW-0800">Toxin</keyword>
<sequence>MRRFVFLAFVLVLFVIANLDSSSAQVNFSPDWGQGKRSGSSDTCAVCAQTMAQVYRLLQGLEAKLGQSRNYSR</sequence>
<proteinExistence type="inferred from homology"/>
<evidence type="ECO:0000255" key="1"/>
<evidence type="ECO:0000303" key="2">
    <source>
    </source>
</evidence>
<evidence type="ECO:0000305" key="3"/>
<evidence type="ECO:0000305" key="4">
    <source>
    </source>
</evidence>
<organism>
    <name type="scientific">Cormocephalus westwoodi</name>
    <name type="common">Westwood's green centipede</name>
    <dbReference type="NCBI Taxonomy" id="1096223"/>
    <lineage>
        <taxon>Eukaryota</taxon>
        <taxon>Metazoa</taxon>
        <taxon>Ecdysozoa</taxon>
        <taxon>Arthropoda</taxon>
        <taxon>Myriapoda</taxon>
        <taxon>Chilopoda</taxon>
        <taxon>Pleurostigmophora</taxon>
        <taxon>Scolopendromorpha</taxon>
        <taxon>Scolopendridae</taxon>
        <taxon>Cormocephalus</taxon>
    </lineage>
</organism>
<feature type="signal peptide" evidence="1">
    <location>
        <begin position="1"/>
        <end position="24"/>
    </location>
</feature>
<feature type="chain" id="PRO_0000446832" description="U-scoloptoxin(22)-Cw1a" evidence="3">
    <location>
        <begin position="25"/>
        <end position="73"/>
    </location>
</feature>
<protein>
    <recommendedName>
        <fullName evidence="2">U-scoloptoxin(22)-Cw1a</fullName>
        <shortName evidence="2">U-SLPTX(22)-Cw1a</shortName>
    </recommendedName>
</protein>
<dbReference type="GO" id="GO:0005576">
    <property type="term" value="C:extracellular region"/>
    <property type="evidence" value="ECO:0007669"/>
    <property type="project" value="UniProtKB-SubCell"/>
</dbReference>
<dbReference type="GO" id="GO:0005179">
    <property type="term" value="F:hormone activity"/>
    <property type="evidence" value="ECO:0007669"/>
    <property type="project" value="InterPro"/>
</dbReference>
<dbReference type="GO" id="GO:0090729">
    <property type="term" value="F:toxin activity"/>
    <property type="evidence" value="ECO:0007669"/>
    <property type="project" value="UniProtKB-KW"/>
</dbReference>
<dbReference type="InterPro" id="IPR002047">
    <property type="entry name" value="Adipokinetic_hormone_CS"/>
</dbReference>
<dbReference type="InterPro" id="IPR010475">
    <property type="entry name" value="AKH/RPCH_hormone"/>
</dbReference>
<dbReference type="Pfam" id="PF06377">
    <property type="entry name" value="Adipokin_hormo"/>
    <property type="match status" value="1"/>
</dbReference>
<dbReference type="PROSITE" id="PS00256">
    <property type="entry name" value="AKH"/>
    <property type="match status" value="1"/>
</dbReference>